<protein>
    <recommendedName>
        <fullName evidence="1">Phosphoenolpyruvate transferase</fullName>
        <ecNumber evidence="1">2.7.8.28</ecNumber>
    </recommendedName>
    <alternativeName>
        <fullName evidence="1">EPPG:FO PEP transferase</fullName>
    </alternativeName>
</protein>
<dbReference type="EC" id="2.7.8.28" evidence="1"/>
<dbReference type="EMBL" id="BA000030">
    <property type="protein sequence ID" value="BAC72752.1"/>
    <property type="molecule type" value="Genomic_DNA"/>
</dbReference>
<dbReference type="SMR" id="Q82DE2"/>
<dbReference type="GeneID" id="41542121"/>
<dbReference type="KEGG" id="sma:SAVERM_5040"/>
<dbReference type="eggNOG" id="COG0391">
    <property type="taxonomic scope" value="Bacteria"/>
</dbReference>
<dbReference type="HOGENOM" id="CLU_055795_0_0_11"/>
<dbReference type="OrthoDB" id="7466225at2"/>
<dbReference type="UniPathway" id="UPA00071"/>
<dbReference type="Proteomes" id="UP000000428">
    <property type="component" value="Chromosome"/>
</dbReference>
<dbReference type="GO" id="GO:0043743">
    <property type="term" value="F:LPPG:FO 2-phospho-L-lactate transferase activity"/>
    <property type="evidence" value="ECO:0007669"/>
    <property type="project" value="UniProtKB-EC"/>
</dbReference>
<dbReference type="GO" id="GO:0000287">
    <property type="term" value="F:magnesium ion binding"/>
    <property type="evidence" value="ECO:0007669"/>
    <property type="project" value="InterPro"/>
</dbReference>
<dbReference type="GO" id="GO:0052645">
    <property type="term" value="P:F420-0 metabolic process"/>
    <property type="evidence" value="ECO:0007669"/>
    <property type="project" value="UniProtKB-UniRule"/>
</dbReference>
<dbReference type="CDD" id="cd07186">
    <property type="entry name" value="CofD_like"/>
    <property type="match status" value="1"/>
</dbReference>
<dbReference type="FunFam" id="1.10.8.240:FF:000001">
    <property type="entry name" value="2-phospho-L-lactate transferase"/>
    <property type="match status" value="1"/>
</dbReference>
<dbReference type="FunFam" id="3.40.50.10680:FF:000001">
    <property type="entry name" value="2-phospho-L-lactate transferase"/>
    <property type="match status" value="1"/>
</dbReference>
<dbReference type="Gene3D" id="1.10.8.240">
    <property type="entry name" value="CofD-like domain"/>
    <property type="match status" value="1"/>
</dbReference>
<dbReference type="Gene3D" id="3.40.50.10680">
    <property type="entry name" value="CofD-like domains"/>
    <property type="match status" value="1"/>
</dbReference>
<dbReference type="HAMAP" id="MF_01257">
    <property type="entry name" value="CofD"/>
    <property type="match status" value="1"/>
</dbReference>
<dbReference type="InterPro" id="IPR002882">
    <property type="entry name" value="CofD"/>
</dbReference>
<dbReference type="InterPro" id="IPR038136">
    <property type="entry name" value="CofD-like_dom_sf"/>
</dbReference>
<dbReference type="InterPro" id="IPR010115">
    <property type="entry name" value="FbiA/CofD"/>
</dbReference>
<dbReference type="NCBIfam" id="TIGR01819">
    <property type="entry name" value="F420_cofD"/>
    <property type="match status" value="1"/>
</dbReference>
<dbReference type="PANTHER" id="PTHR43007">
    <property type="entry name" value="2-PHOSPHO-L-LACTATE TRANSFERASE"/>
    <property type="match status" value="1"/>
</dbReference>
<dbReference type="PANTHER" id="PTHR43007:SF1">
    <property type="entry name" value="2-PHOSPHO-L-LACTATE TRANSFERASE"/>
    <property type="match status" value="1"/>
</dbReference>
<dbReference type="Pfam" id="PF01933">
    <property type="entry name" value="CofD"/>
    <property type="match status" value="1"/>
</dbReference>
<dbReference type="SUPFAM" id="SSF142338">
    <property type="entry name" value="CofD-like"/>
    <property type="match status" value="1"/>
</dbReference>
<organism>
    <name type="scientific">Streptomyces avermitilis (strain ATCC 31267 / DSM 46492 / JCM 5070 / NBRC 14893 / NCIMB 12804 / NRRL 8165 / MA-4680)</name>
    <dbReference type="NCBI Taxonomy" id="227882"/>
    <lineage>
        <taxon>Bacteria</taxon>
        <taxon>Bacillati</taxon>
        <taxon>Actinomycetota</taxon>
        <taxon>Actinomycetes</taxon>
        <taxon>Kitasatosporales</taxon>
        <taxon>Streptomycetaceae</taxon>
        <taxon>Streptomyces</taxon>
    </lineage>
</organism>
<sequence length="319" mass="33585">MRIVVLAGGIGGARFLRGLQRAAPDADITVIGNTGDDIHLFGLKVCPDLDTVMYTLGGGINEEQGWGRADETFHLKEELAAYGVGPEWFGLGDRDFATHIVRTQMLGAGYPLSAVTQALCDRWKPGVRLIPMSDDRIETHVAVDMDGERKAVHFQEYWVRLRASVPAVAVVPVGAEQAKPAPGVLEAIAEADVVLFPPSNPVVSVGTILAVPGIREAIAEAGVPVVGLSPIVGDAPVRGMADKVLAAVGVESTAAAVAEHYGSGLLDGWLVDTVDASVVERVEAAGIRCRAVPLMMTDLDATAQMAREALALAEEVRTP</sequence>
<reference key="1">
    <citation type="journal article" date="2001" name="Proc. Natl. Acad. Sci. U.S.A.">
        <title>Genome sequence of an industrial microorganism Streptomyces avermitilis: deducing the ability of producing secondary metabolites.</title>
        <authorList>
            <person name="Omura S."/>
            <person name="Ikeda H."/>
            <person name="Ishikawa J."/>
            <person name="Hanamoto A."/>
            <person name="Takahashi C."/>
            <person name="Shinose M."/>
            <person name="Takahashi Y."/>
            <person name="Horikawa H."/>
            <person name="Nakazawa H."/>
            <person name="Osonoe T."/>
            <person name="Kikuchi H."/>
            <person name="Shiba T."/>
            <person name="Sakaki Y."/>
            <person name="Hattori M."/>
        </authorList>
    </citation>
    <scope>NUCLEOTIDE SEQUENCE [LARGE SCALE GENOMIC DNA]</scope>
    <source>
        <strain>ATCC 31267 / DSM 46492 / JCM 5070 / NBRC 14893 / NCIMB 12804 / NRRL 8165 / MA-4680</strain>
    </source>
</reference>
<reference key="2">
    <citation type="journal article" date="2003" name="Nat. Biotechnol.">
        <title>Complete genome sequence and comparative analysis of the industrial microorganism Streptomyces avermitilis.</title>
        <authorList>
            <person name="Ikeda H."/>
            <person name="Ishikawa J."/>
            <person name="Hanamoto A."/>
            <person name="Shinose M."/>
            <person name="Kikuchi H."/>
            <person name="Shiba T."/>
            <person name="Sakaki Y."/>
            <person name="Hattori M."/>
            <person name="Omura S."/>
        </authorList>
    </citation>
    <scope>NUCLEOTIDE SEQUENCE [LARGE SCALE GENOMIC DNA]</scope>
    <source>
        <strain>ATCC 31267 / DSM 46492 / JCM 5070 / NBRC 14893 / NCIMB 12804 / NRRL 8165 / MA-4680</strain>
    </source>
</reference>
<accession>Q82DE2</accession>
<gene>
    <name evidence="1" type="primary">fbiA</name>
    <name type="ordered locus">SAV_5040</name>
</gene>
<proteinExistence type="inferred from homology"/>
<keyword id="KW-0460">Magnesium</keyword>
<keyword id="KW-1185">Reference proteome</keyword>
<keyword id="KW-0808">Transferase</keyword>
<feature type="chain" id="PRO_0000145766" description="Phosphoenolpyruvate transferase">
    <location>
        <begin position="1"/>
        <end position="319"/>
    </location>
</feature>
<feature type="binding site" evidence="1">
    <location>
        <position position="50"/>
    </location>
    <ligand>
        <name>7,8-didemethyl-8-hydroxy-5-deazariboflavin</name>
        <dbReference type="ChEBI" id="CHEBI:59904"/>
    </ligand>
</feature>
<comment type="function">
    <text evidence="1">Catalyzes the transfer of the phosphoenolpyruvate moiety from enoylpyruvoyl-2-diphospho-5'-guanosine (EPPG) to 7,8-didemethyl-8-hydroxy-5-deazariboflavin (FO) with the formation of dehydro coenzyme F420-0 and GMP.</text>
</comment>
<comment type="catalytic activity">
    <reaction evidence="1">
        <text>enolpyruvoyl-2-diphospho-5'-guanosine + 7,8-didemethyl-8-hydroxy-5-deazariboflavin = dehydro coenzyme F420-0 + GMP + H(+)</text>
        <dbReference type="Rhea" id="RHEA:27510"/>
        <dbReference type="ChEBI" id="CHEBI:15378"/>
        <dbReference type="ChEBI" id="CHEBI:58115"/>
        <dbReference type="ChEBI" id="CHEBI:59904"/>
        <dbReference type="ChEBI" id="CHEBI:143701"/>
        <dbReference type="ChEBI" id="CHEBI:143705"/>
        <dbReference type="EC" id="2.7.8.28"/>
    </reaction>
</comment>
<comment type="cofactor">
    <cofactor evidence="1">
        <name>Mg(2+)</name>
        <dbReference type="ChEBI" id="CHEBI:18420"/>
    </cofactor>
</comment>
<comment type="pathway">
    <text evidence="1">Cofactor biosynthesis; coenzyme F420 biosynthesis.</text>
</comment>
<comment type="subunit">
    <text evidence="1">Homodimer.</text>
</comment>
<comment type="similarity">
    <text evidence="1">Belongs to the CofD family.</text>
</comment>
<evidence type="ECO:0000255" key="1">
    <source>
        <dbReference type="HAMAP-Rule" id="MF_01257"/>
    </source>
</evidence>
<name>FBIA_STRAW</name>